<keyword id="KW-0028">Amino-acid biosynthesis</keyword>
<keyword id="KW-0061">Asparagine biosynthesis</keyword>
<keyword id="KW-0067">ATP-binding</keyword>
<keyword id="KW-0963">Cytoplasm</keyword>
<keyword id="KW-0436">Ligase</keyword>
<keyword id="KW-0547">Nucleotide-binding</keyword>
<feature type="chain" id="PRO_0000195886" description="Aspartate--ammonia ligase">
    <location>
        <begin position="1"/>
        <end position="330"/>
    </location>
</feature>
<accession>Q8Z2Q9</accession>
<evidence type="ECO:0000250" key="1"/>
<evidence type="ECO:0000255" key="2">
    <source>
        <dbReference type="HAMAP-Rule" id="MF_00555"/>
    </source>
</evidence>
<name>ASNA_SALTI</name>
<organism>
    <name type="scientific">Salmonella typhi</name>
    <dbReference type="NCBI Taxonomy" id="90370"/>
    <lineage>
        <taxon>Bacteria</taxon>
        <taxon>Pseudomonadati</taxon>
        <taxon>Pseudomonadota</taxon>
        <taxon>Gammaproteobacteria</taxon>
        <taxon>Enterobacterales</taxon>
        <taxon>Enterobacteriaceae</taxon>
        <taxon>Salmonella</taxon>
    </lineage>
</organism>
<proteinExistence type="inferred from homology"/>
<comment type="catalytic activity">
    <reaction evidence="2">
        <text>L-aspartate + NH4(+) + ATP = L-asparagine + AMP + diphosphate + H(+)</text>
        <dbReference type="Rhea" id="RHEA:11372"/>
        <dbReference type="ChEBI" id="CHEBI:15378"/>
        <dbReference type="ChEBI" id="CHEBI:28938"/>
        <dbReference type="ChEBI" id="CHEBI:29991"/>
        <dbReference type="ChEBI" id="CHEBI:30616"/>
        <dbReference type="ChEBI" id="CHEBI:33019"/>
        <dbReference type="ChEBI" id="CHEBI:58048"/>
        <dbReference type="ChEBI" id="CHEBI:456215"/>
        <dbReference type="EC" id="6.3.1.1"/>
    </reaction>
</comment>
<comment type="pathway">
    <text evidence="2">Amino-acid biosynthesis; L-asparagine biosynthesis; L-asparagine from L-aspartate (ammonia route): step 1/1.</text>
</comment>
<comment type="subunit">
    <text evidence="1">Homodimer.</text>
</comment>
<comment type="subcellular location">
    <subcellularLocation>
        <location evidence="2">Cytoplasm</location>
    </subcellularLocation>
</comment>
<comment type="similarity">
    <text evidence="2">Belongs to the class-II aminoacyl-tRNA synthetase family. AsnA subfamily.</text>
</comment>
<dbReference type="EC" id="6.3.1.1" evidence="2"/>
<dbReference type="EMBL" id="AL513382">
    <property type="protein sequence ID" value="CAD03118.1"/>
    <property type="molecule type" value="Genomic_DNA"/>
</dbReference>
<dbReference type="EMBL" id="AE014613">
    <property type="protein sequence ID" value="AAO71139.1"/>
    <property type="molecule type" value="Genomic_DNA"/>
</dbReference>
<dbReference type="RefSeq" id="NP_458066.1">
    <property type="nucleotide sequence ID" value="NC_003198.1"/>
</dbReference>
<dbReference type="RefSeq" id="WP_000845119.1">
    <property type="nucleotide sequence ID" value="NZ_WSUR01000023.1"/>
</dbReference>
<dbReference type="SMR" id="Q8Z2Q9"/>
<dbReference type="STRING" id="220341.gene:17587761"/>
<dbReference type="KEGG" id="stt:t3642"/>
<dbReference type="KEGG" id="sty:STY3901"/>
<dbReference type="PATRIC" id="fig|220341.7.peg.3981"/>
<dbReference type="eggNOG" id="COG2502">
    <property type="taxonomic scope" value="Bacteria"/>
</dbReference>
<dbReference type="HOGENOM" id="CLU_071543_0_0_6"/>
<dbReference type="OMA" id="QSRICMF"/>
<dbReference type="OrthoDB" id="3185462at2"/>
<dbReference type="UniPathway" id="UPA00134">
    <property type="reaction ID" value="UER00194"/>
</dbReference>
<dbReference type="Proteomes" id="UP000000541">
    <property type="component" value="Chromosome"/>
</dbReference>
<dbReference type="Proteomes" id="UP000002670">
    <property type="component" value="Chromosome"/>
</dbReference>
<dbReference type="GO" id="GO:0005829">
    <property type="term" value="C:cytosol"/>
    <property type="evidence" value="ECO:0007669"/>
    <property type="project" value="TreeGrafter"/>
</dbReference>
<dbReference type="GO" id="GO:0004071">
    <property type="term" value="F:aspartate-ammonia ligase activity"/>
    <property type="evidence" value="ECO:0007669"/>
    <property type="project" value="UniProtKB-UniRule"/>
</dbReference>
<dbReference type="GO" id="GO:0005524">
    <property type="term" value="F:ATP binding"/>
    <property type="evidence" value="ECO:0007669"/>
    <property type="project" value="UniProtKB-UniRule"/>
</dbReference>
<dbReference type="GO" id="GO:0070981">
    <property type="term" value="P:L-asparagine biosynthetic process"/>
    <property type="evidence" value="ECO:0007669"/>
    <property type="project" value="UniProtKB-UniRule"/>
</dbReference>
<dbReference type="CDD" id="cd00645">
    <property type="entry name" value="AsnA"/>
    <property type="match status" value="1"/>
</dbReference>
<dbReference type="FunFam" id="3.30.930.10:FF:000025">
    <property type="entry name" value="Aspartate--ammonia ligase"/>
    <property type="match status" value="1"/>
</dbReference>
<dbReference type="Gene3D" id="3.30.930.10">
    <property type="entry name" value="Bira Bifunctional Protein, Domain 2"/>
    <property type="match status" value="1"/>
</dbReference>
<dbReference type="HAMAP" id="MF_00555">
    <property type="entry name" value="AsnA"/>
    <property type="match status" value="1"/>
</dbReference>
<dbReference type="InterPro" id="IPR006195">
    <property type="entry name" value="aa-tRNA-synth_II"/>
</dbReference>
<dbReference type="InterPro" id="IPR045864">
    <property type="entry name" value="aa-tRNA-synth_II/BPL/LPL"/>
</dbReference>
<dbReference type="InterPro" id="IPR004618">
    <property type="entry name" value="AsnA"/>
</dbReference>
<dbReference type="NCBIfam" id="TIGR00669">
    <property type="entry name" value="asnA"/>
    <property type="match status" value="1"/>
</dbReference>
<dbReference type="PANTHER" id="PTHR30073">
    <property type="entry name" value="ASPARTATE--AMMONIA LIGASE"/>
    <property type="match status" value="1"/>
</dbReference>
<dbReference type="PANTHER" id="PTHR30073:SF5">
    <property type="entry name" value="ASPARTATE--AMMONIA LIGASE"/>
    <property type="match status" value="1"/>
</dbReference>
<dbReference type="Pfam" id="PF03590">
    <property type="entry name" value="AsnA"/>
    <property type="match status" value="1"/>
</dbReference>
<dbReference type="PIRSF" id="PIRSF001555">
    <property type="entry name" value="Asp_ammon_ligase"/>
    <property type="match status" value="1"/>
</dbReference>
<dbReference type="SUPFAM" id="SSF55681">
    <property type="entry name" value="Class II aaRS and biotin synthetases"/>
    <property type="match status" value="1"/>
</dbReference>
<dbReference type="PROSITE" id="PS50862">
    <property type="entry name" value="AA_TRNA_LIGASE_II"/>
    <property type="match status" value="1"/>
</dbReference>
<reference key="1">
    <citation type="journal article" date="2001" name="Nature">
        <title>Complete genome sequence of a multiple drug resistant Salmonella enterica serovar Typhi CT18.</title>
        <authorList>
            <person name="Parkhill J."/>
            <person name="Dougan G."/>
            <person name="James K.D."/>
            <person name="Thomson N.R."/>
            <person name="Pickard D."/>
            <person name="Wain J."/>
            <person name="Churcher C.M."/>
            <person name="Mungall K.L."/>
            <person name="Bentley S.D."/>
            <person name="Holden M.T.G."/>
            <person name="Sebaihia M."/>
            <person name="Baker S."/>
            <person name="Basham D."/>
            <person name="Brooks K."/>
            <person name="Chillingworth T."/>
            <person name="Connerton P."/>
            <person name="Cronin A."/>
            <person name="Davis P."/>
            <person name="Davies R.M."/>
            <person name="Dowd L."/>
            <person name="White N."/>
            <person name="Farrar J."/>
            <person name="Feltwell T."/>
            <person name="Hamlin N."/>
            <person name="Haque A."/>
            <person name="Hien T.T."/>
            <person name="Holroyd S."/>
            <person name="Jagels K."/>
            <person name="Krogh A."/>
            <person name="Larsen T.S."/>
            <person name="Leather S."/>
            <person name="Moule S."/>
            <person name="O'Gaora P."/>
            <person name="Parry C."/>
            <person name="Quail M.A."/>
            <person name="Rutherford K.M."/>
            <person name="Simmonds M."/>
            <person name="Skelton J."/>
            <person name="Stevens K."/>
            <person name="Whitehead S."/>
            <person name="Barrell B.G."/>
        </authorList>
    </citation>
    <scope>NUCLEOTIDE SEQUENCE [LARGE SCALE GENOMIC DNA]</scope>
    <source>
        <strain>CT18</strain>
    </source>
</reference>
<reference key="2">
    <citation type="journal article" date="2003" name="J. Bacteriol.">
        <title>Comparative genomics of Salmonella enterica serovar Typhi strains Ty2 and CT18.</title>
        <authorList>
            <person name="Deng W."/>
            <person name="Liou S.-R."/>
            <person name="Plunkett G. III"/>
            <person name="Mayhew G.F."/>
            <person name="Rose D.J."/>
            <person name="Burland V."/>
            <person name="Kodoyianni V."/>
            <person name="Schwartz D.C."/>
            <person name="Blattner F.R."/>
        </authorList>
    </citation>
    <scope>NUCLEOTIDE SEQUENCE [LARGE SCALE GENOMIC DNA]</scope>
    <source>
        <strain>ATCC 700931 / Ty2</strain>
    </source>
</reference>
<gene>
    <name evidence="2" type="primary">asnA</name>
    <name type="ordered locus">STY3901</name>
    <name type="ordered locus">t3642</name>
</gene>
<sequence length="330" mass="36820">MKTAYIAKQRQISFVKSHFSRQLEERLGLIEVQAPILSRVGDGTQDNLSGCEKAVQVKVKALPDAQFEVVHSLAKWKRQTLGQHDFSAGEGLYTHMKALRPDEDRLSPLHSVYVDQWDWERVMGDGERQFSTLKSTVEAIWAGIKATEAEVHKQFGLAPFLPDQIHFVHSQELLARFPDLDAKGRERAIAKELGAVFLVGIGGKLSDGRRHDVRAPDYDDWSSASELGYAGLNGDILVWNPVLEDAFELSSMGIRVDADTLMRQLALTGDEDRLQLEWHQALLRGEMPQTIGGGIGQSRLTMLLLQLPHIGQVQCGVWPAQVRESIPAIL</sequence>
<protein>
    <recommendedName>
        <fullName evidence="2">Aspartate--ammonia ligase</fullName>
        <ecNumber evidence="2">6.3.1.1</ecNumber>
    </recommendedName>
    <alternativeName>
        <fullName evidence="2">Asparagine synthetase A</fullName>
    </alternativeName>
</protein>